<comment type="function">
    <text evidence="1">Attaches a formyl group to the free amino group of methionyl-tRNA(fMet). The formyl group appears to play a dual role in the initiator identity of N-formylmethionyl-tRNA by promoting its recognition by IF2 and preventing the misappropriation of this tRNA by the elongation apparatus.</text>
</comment>
<comment type="catalytic activity">
    <reaction evidence="1">
        <text>L-methionyl-tRNA(fMet) + (6R)-10-formyltetrahydrofolate = N-formyl-L-methionyl-tRNA(fMet) + (6S)-5,6,7,8-tetrahydrofolate + H(+)</text>
        <dbReference type="Rhea" id="RHEA:24380"/>
        <dbReference type="Rhea" id="RHEA-COMP:9952"/>
        <dbReference type="Rhea" id="RHEA-COMP:9953"/>
        <dbReference type="ChEBI" id="CHEBI:15378"/>
        <dbReference type="ChEBI" id="CHEBI:57453"/>
        <dbReference type="ChEBI" id="CHEBI:78530"/>
        <dbReference type="ChEBI" id="CHEBI:78844"/>
        <dbReference type="ChEBI" id="CHEBI:195366"/>
        <dbReference type="EC" id="2.1.2.9"/>
    </reaction>
</comment>
<comment type="similarity">
    <text evidence="1">Belongs to the Fmt family.</text>
</comment>
<dbReference type="EC" id="2.1.2.9" evidence="1"/>
<dbReference type="EMBL" id="CP000009">
    <property type="protein sequence ID" value="AAW61574.1"/>
    <property type="molecule type" value="Genomic_DNA"/>
</dbReference>
<dbReference type="RefSeq" id="WP_011253355.1">
    <property type="nucleotide sequence ID" value="NC_006677.1"/>
</dbReference>
<dbReference type="SMR" id="Q5FPX2"/>
<dbReference type="STRING" id="290633.GOX1835"/>
<dbReference type="KEGG" id="gox:GOX1835"/>
<dbReference type="eggNOG" id="COG0223">
    <property type="taxonomic scope" value="Bacteria"/>
</dbReference>
<dbReference type="HOGENOM" id="CLU_033347_1_2_5"/>
<dbReference type="Proteomes" id="UP000006375">
    <property type="component" value="Chromosome"/>
</dbReference>
<dbReference type="GO" id="GO:0005829">
    <property type="term" value="C:cytosol"/>
    <property type="evidence" value="ECO:0007669"/>
    <property type="project" value="TreeGrafter"/>
</dbReference>
<dbReference type="GO" id="GO:0004479">
    <property type="term" value="F:methionyl-tRNA formyltransferase activity"/>
    <property type="evidence" value="ECO:0007669"/>
    <property type="project" value="UniProtKB-UniRule"/>
</dbReference>
<dbReference type="CDD" id="cd08646">
    <property type="entry name" value="FMT_core_Met-tRNA-FMT_N"/>
    <property type="match status" value="1"/>
</dbReference>
<dbReference type="CDD" id="cd08704">
    <property type="entry name" value="Met_tRNA_FMT_C"/>
    <property type="match status" value="1"/>
</dbReference>
<dbReference type="FunFam" id="3.40.50.12230:FF:000001">
    <property type="entry name" value="Methionyl-tRNA formyltransferase"/>
    <property type="match status" value="1"/>
</dbReference>
<dbReference type="Gene3D" id="3.10.25.10">
    <property type="entry name" value="Formyl transferase, C-terminal domain"/>
    <property type="match status" value="1"/>
</dbReference>
<dbReference type="Gene3D" id="3.40.50.170">
    <property type="entry name" value="Formyl transferase, N-terminal domain"/>
    <property type="match status" value="1"/>
</dbReference>
<dbReference type="HAMAP" id="MF_00182">
    <property type="entry name" value="Formyl_trans"/>
    <property type="match status" value="1"/>
</dbReference>
<dbReference type="InterPro" id="IPR005794">
    <property type="entry name" value="Fmt"/>
</dbReference>
<dbReference type="InterPro" id="IPR005793">
    <property type="entry name" value="Formyl_trans_C"/>
</dbReference>
<dbReference type="InterPro" id="IPR037022">
    <property type="entry name" value="Formyl_trans_C_sf"/>
</dbReference>
<dbReference type="InterPro" id="IPR002376">
    <property type="entry name" value="Formyl_transf_N"/>
</dbReference>
<dbReference type="InterPro" id="IPR036477">
    <property type="entry name" value="Formyl_transf_N_sf"/>
</dbReference>
<dbReference type="InterPro" id="IPR011034">
    <property type="entry name" value="Formyl_transferase-like_C_sf"/>
</dbReference>
<dbReference type="InterPro" id="IPR001555">
    <property type="entry name" value="GART_AS"/>
</dbReference>
<dbReference type="InterPro" id="IPR044135">
    <property type="entry name" value="Met-tRNA-FMT_C"/>
</dbReference>
<dbReference type="InterPro" id="IPR041711">
    <property type="entry name" value="Met-tRNA-FMT_N"/>
</dbReference>
<dbReference type="NCBIfam" id="TIGR00460">
    <property type="entry name" value="fmt"/>
    <property type="match status" value="1"/>
</dbReference>
<dbReference type="PANTHER" id="PTHR11138">
    <property type="entry name" value="METHIONYL-TRNA FORMYLTRANSFERASE"/>
    <property type="match status" value="1"/>
</dbReference>
<dbReference type="PANTHER" id="PTHR11138:SF5">
    <property type="entry name" value="METHIONYL-TRNA FORMYLTRANSFERASE, MITOCHONDRIAL"/>
    <property type="match status" value="1"/>
</dbReference>
<dbReference type="Pfam" id="PF02911">
    <property type="entry name" value="Formyl_trans_C"/>
    <property type="match status" value="1"/>
</dbReference>
<dbReference type="Pfam" id="PF00551">
    <property type="entry name" value="Formyl_trans_N"/>
    <property type="match status" value="1"/>
</dbReference>
<dbReference type="SUPFAM" id="SSF50486">
    <property type="entry name" value="FMT C-terminal domain-like"/>
    <property type="match status" value="1"/>
</dbReference>
<dbReference type="SUPFAM" id="SSF53328">
    <property type="entry name" value="Formyltransferase"/>
    <property type="match status" value="1"/>
</dbReference>
<dbReference type="PROSITE" id="PS00373">
    <property type="entry name" value="GART"/>
    <property type="match status" value="1"/>
</dbReference>
<evidence type="ECO:0000255" key="1">
    <source>
        <dbReference type="HAMAP-Rule" id="MF_00182"/>
    </source>
</evidence>
<organism>
    <name type="scientific">Gluconobacter oxydans (strain 621H)</name>
    <name type="common">Gluconobacter suboxydans</name>
    <dbReference type="NCBI Taxonomy" id="290633"/>
    <lineage>
        <taxon>Bacteria</taxon>
        <taxon>Pseudomonadati</taxon>
        <taxon>Pseudomonadota</taxon>
        <taxon>Alphaproteobacteria</taxon>
        <taxon>Acetobacterales</taxon>
        <taxon>Acetobacteraceae</taxon>
        <taxon>Gluconobacter</taxon>
    </lineage>
</organism>
<sequence>MRLIFMGTPDFSVPALHALLDAGHEVVAVYTQPPRPAGRGKALRRSPVHEAAEAAGIEVRTPARVRRDTAEHEAFAALNADAAVVAAYGLILPKAMLDAPRLGCLNIHASLLPRWRGASPIQSAIVAGDSQSGVSIMQMDEGLDTGAVLLEEATPISATDTASTLHDRLSEIGGRLVVRALAEQPKPVPQPEDGVTYAERLTRDHGRIDWTRSAAEIDRQIRGLTPWPGAFTTLDDVVLKIGAATPLPAESHSAAPGTTLGESLTIACGTGALRIDRLQKPGRSMMSASDFLRGQPVPKGTRLV</sequence>
<gene>
    <name evidence="1" type="primary">fmt</name>
    <name type="ordered locus">GOX1835</name>
</gene>
<accession>Q5FPX2</accession>
<feature type="chain" id="PRO_0000082971" description="Methionyl-tRNA formyltransferase">
    <location>
        <begin position="1"/>
        <end position="304"/>
    </location>
</feature>
<feature type="binding site" evidence="1">
    <location>
        <begin position="110"/>
        <end position="113"/>
    </location>
    <ligand>
        <name>(6S)-5,6,7,8-tetrahydrofolate</name>
        <dbReference type="ChEBI" id="CHEBI:57453"/>
    </ligand>
</feature>
<protein>
    <recommendedName>
        <fullName evidence="1">Methionyl-tRNA formyltransferase</fullName>
        <ecNumber evidence="1">2.1.2.9</ecNumber>
    </recommendedName>
</protein>
<proteinExistence type="inferred from homology"/>
<keyword id="KW-0648">Protein biosynthesis</keyword>
<keyword id="KW-1185">Reference proteome</keyword>
<keyword id="KW-0808">Transferase</keyword>
<name>FMT_GLUOX</name>
<reference key="1">
    <citation type="journal article" date="2005" name="Nat. Biotechnol.">
        <title>Complete genome sequence of the acetic acid bacterium Gluconobacter oxydans.</title>
        <authorList>
            <person name="Prust C."/>
            <person name="Hoffmeister M."/>
            <person name="Liesegang H."/>
            <person name="Wiezer A."/>
            <person name="Fricke W.F."/>
            <person name="Ehrenreich A."/>
            <person name="Gottschalk G."/>
            <person name="Deppenmeier U."/>
        </authorList>
    </citation>
    <scope>NUCLEOTIDE SEQUENCE [LARGE SCALE GENOMIC DNA]</scope>
    <source>
        <strain>621H</strain>
    </source>
</reference>